<organism>
    <name type="scientific">Saccharomyces cerevisiae (strain ATCC 204508 / S288c)</name>
    <name type="common">Baker's yeast</name>
    <dbReference type="NCBI Taxonomy" id="559292"/>
    <lineage>
        <taxon>Eukaryota</taxon>
        <taxon>Fungi</taxon>
        <taxon>Dikarya</taxon>
        <taxon>Ascomycota</taxon>
        <taxon>Saccharomycotina</taxon>
        <taxon>Saccharomycetes</taxon>
        <taxon>Saccharomycetales</taxon>
        <taxon>Saccharomycetaceae</taxon>
        <taxon>Saccharomyces</taxon>
    </lineage>
</organism>
<gene>
    <name type="primary">REB1</name>
    <name type="synonym">GRF2</name>
    <name type="ordered locus">YBR049C</name>
    <name type="ORF">YBR0502</name>
</gene>
<keyword id="KW-0238">DNA-binding</keyword>
<keyword id="KW-1017">Isopeptide bond</keyword>
<keyword id="KW-0539">Nucleus</keyword>
<keyword id="KW-0597">Phosphoprotein</keyword>
<keyword id="KW-1185">Reference proteome</keyword>
<keyword id="KW-0677">Repeat</keyword>
<keyword id="KW-0804">Transcription</keyword>
<keyword id="KW-0805">Transcription regulation</keyword>
<keyword id="KW-0832">Ubl conjugation</keyword>
<protein>
    <recommendedName>
        <fullName>DNA-binding protein REB1</fullName>
    </recommendedName>
    <alternativeName>
        <fullName>QBP</fullName>
    </alternativeName>
</protein>
<sequence length="810" mass="91874">MPSGHNDKNANQESVEEAVLKYVGVGLDHQNHDPQLHTKDLENKHSKKQNIVESSSDVDVNNNDDSNRNEDNNDDSENISALNANESSSNVDHANSNEQHNAVMDWYLRQTAHNQQDDEDDENNNNTDNGNDSNNHFSQSDIVVDDDDDKNKKDAGVGVDDDHQSMAMAAVAAAYTLSKNNNNNNSIANDSNSRKRQHDNGNNHENSQKKRKNNNDDDDRQIGNVDPELTTLGDADDNDTNNDVIDRDQLVHKAIIDADSITQHPDFQQYLNTAADTDDNEKLKHIKDHLMRTHGLNHQNKNHNDDTDDLSNSTKQYSELQKDSMLDSSLNKSRNYMEVLPKVISQDTQPHQQKSPSHDNEAGSVDNSEISQLLQSAATKASSLVSLSSSSATPSTSRSNNSKAFDKAEDAALERFINEYEAIERLTRQQVCERIWSSDRPKDNFWNNIYKVLPYRSSSSIYKHMRRKYHIFEQRGKWTAEEEQELAKLCAEKEGQWAEIGKTLGRMPEDCRDRWRNYVKCGTNRASNRWSVEEEELLKKVISDMLEEAQQQQSQLHPNLLEEEQHLLQDDQNDHRNNDEDDDDTASAAAAAAAAIQEQQQLLQQKQQDDDDAIAAAAAAASSSLGDNKDEDKPHDSLGIQLDDNSQNSMVPAPSATSTHSKSLSNTIRRHNNKLRKSLMGNGKLDFKDIINWTIVSERMGGTRSRIQCRYKWNKLVKREAIAKIQTVKDDDMLWIFEKLRDLGITEDSQVDWDELAALKPGMKLNGLELKLCYERMKKKVKGYKQKSINEISKELVDYFSSNISMKTEN</sequence>
<accession>P21538</accession>
<accession>D6VQ49</accession>
<proteinExistence type="evidence at protein level"/>
<dbReference type="EMBL" id="M58728">
    <property type="protein sequence ID" value="AAA34963.1"/>
    <property type="molecule type" value="Genomic_DNA"/>
</dbReference>
<dbReference type="EMBL" id="Z35918">
    <property type="protein sequence ID" value="CAA84992.1"/>
    <property type="molecule type" value="Genomic_DNA"/>
</dbReference>
<dbReference type="EMBL" id="Z46260">
    <property type="protein sequence ID" value="CAA86391.1"/>
    <property type="molecule type" value="Genomic_DNA"/>
</dbReference>
<dbReference type="EMBL" id="BK006936">
    <property type="protein sequence ID" value="DAA07169.1"/>
    <property type="molecule type" value="Genomic_DNA"/>
</dbReference>
<dbReference type="PIR" id="S45907">
    <property type="entry name" value="S45907"/>
</dbReference>
<dbReference type="RefSeq" id="NP_009605.1">
    <property type="nucleotide sequence ID" value="NM_001178397.1"/>
</dbReference>
<dbReference type="BioGRID" id="32751">
    <property type="interactions" value="643"/>
</dbReference>
<dbReference type="DIP" id="DIP-6374N"/>
<dbReference type="FunCoup" id="P21538">
    <property type="interactions" value="1820"/>
</dbReference>
<dbReference type="IntAct" id="P21538">
    <property type="interactions" value="35"/>
</dbReference>
<dbReference type="MINT" id="P21538"/>
<dbReference type="STRING" id="4932.YBR049C"/>
<dbReference type="GlyGen" id="P21538">
    <property type="glycosylation" value="1 site"/>
</dbReference>
<dbReference type="iPTMnet" id="P21538"/>
<dbReference type="PaxDb" id="4932-YBR049C"/>
<dbReference type="PeptideAtlas" id="P21538"/>
<dbReference type="EnsemblFungi" id="YBR049C_mRNA">
    <property type="protein sequence ID" value="YBR049C"/>
    <property type="gene ID" value="YBR049C"/>
</dbReference>
<dbReference type="GeneID" id="852338"/>
<dbReference type="KEGG" id="sce:YBR049C"/>
<dbReference type="AGR" id="SGD:S000000253"/>
<dbReference type="SGD" id="S000000253">
    <property type="gene designation" value="REB1"/>
</dbReference>
<dbReference type="VEuPathDB" id="FungiDB:YBR049C"/>
<dbReference type="eggNOG" id="KOG0051">
    <property type="taxonomic scope" value="Eukaryota"/>
</dbReference>
<dbReference type="GeneTree" id="ENSGT00940000176744"/>
<dbReference type="HOGENOM" id="CLU_016706_0_0_1"/>
<dbReference type="InParanoid" id="P21538"/>
<dbReference type="OMA" id="HVRRKYH"/>
<dbReference type="OrthoDB" id="39591at2759"/>
<dbReference type="BioCyc" id="YEAST:G3O-29021-MONOMER"/>
<dbReference type="BioGRID-ORCS" id="852338">
    <property type="hits" value="4 hits in 13 CRISPR screens"/>
</dbReference>
<dbReference type="PRO" id="PR:P21538"/>
<dbReference type="Proteomes" id="UP000002311">
    <property type="component" value="Chromosome II"/>
</dbReference>
<dbReference type="RNAct" id="P21538">
    <property type="molecule type" value="protein"/>
</dbReference>
<dbReference type="GO" id="GO:0000785">
    <property type="term" value="C:chromatin"/>
    <property type="evidence" value="ECO:0000305"/>
    <property type="project" value="UniProtKB"/>
</dbReference>
<dbReference type="GO" id="GO:0005654">
    <property type="term" value="C:nucleoplasm"/>
    <property type="evidence" value="ECO:0000314"/>
    <property type="project" value="SGD"/>
</dbReference>
<dbReference type="GO" id="GO:0005634">
    <property type="term" value="C:nucleus"/>
    <property type="evidence" value="ECO:0000318"/>
    <property type="project" value="GO_Central"/>
</dbReference>
<dbReference type="GO" id="GO:0001228">
    <property type="term" value="F:DNA-binding transcription activator activity, RNA polymerase II-specific"/>
    <property type="evidence" value="ECO:0000314"/>
    <property type="project" value="UniProtKB"/>
</dbReference>
<dbReference type="GO" id="GO:0003700">
    <property type="term" value="F:DNA-binding transcription factor activity"/>
    <property type="evidence" value="ECO:0000318"/>
    <property type="project" value="GO_Central"/>
</dbReference>
<dbReference type="GO" id="GO:0000978">
    <property type="term" value="F:RNA polymerase II cis-regulatory region sequence-specific DNA binding"/>
    <property type="evidence" value="ECO:0000314"/>
    <property type="project" value="UniProtKB"/>
</dbReference>
<dbReference type="GO" id="GO:0043565">
    <property type="term" value="F:sequence-specific DNA binding"/>
    <property type="evidence" value="ECO:0000314"/>
    <property type="project" value="UniProtKB"/>
</dbReference>
<dbReference type="GO" id="GO:0000976">
    <property type="term" value="F:transcription cis-regulatory region binding"/>
    <property type="evidence" value="ECO:0000318"/>
    <property type="project" value="GO_Central"/>
</dbReference>
<dbReference type="GO" id="GO:0045944">
    <property type="term" value="P:positive regulation of transcription by RNA polymerase II"/>
    <property type="evidence" value="ECO:0000314"/>
    <property type="project" value="UniProtKB"/>
</dbReference>
<dbReference type="GO" id="GO:0006355">
    <property type="term" value="P:regulation of DNA-templated transcription"/>
    <property type="evidence" value="ECO:0000318"/>
    <property type="project" value="GO_Central"/>
</dbReference>
<dbReference type="GO" id="GO:0006357">
    <property type="term" value="P:regulation of transcription by RNA polymerase II"/>
    <property type="evidence" value="ECO:0000315"/>
    <property type="project" value="SGD"/>
</dbReference>
<dbReference type="GO" id="GO:0006369">
    <property type="term" value="P:termination of RNA polymerase II transcription"/>
    <property type="evidence" value="ECO:0000315"/>
    <property type="project" value="SGD"/>
</dbReference>
<dbReference type="GO" id="GO:0001174">
    <property type="term" value="P:transcriptional start site selection at RNA polymerase II promoter"/>
    <property type="evidence" value="ECO:0000314"/>
    <property type="project" value="SGD"/>
</dbReference>
<dbReference type="CDD" id="cd00167">
    <property type="entry name" value="SANT"/>
    <property type="match status" value="1"/>
</dbReference>
<dbReference type="FunFam" id="1.10.10.60:FF:000387">
    <property type="entry name" value="Replication termination factor 1"/>
    <property type="match status" value="1"/>
</dbReference>
<dbReference type="Gene3D" id="1.10.10.60">
    <property type="entry name" value="Homeodomain-like"/>
    <property type="match status" value="2"/>
</dbReference>
<dbReference type="InterPro" id="IPR051651">
    <property type="entry name" value="DMTF1_DNA-bind_reg"/>
</dbReference>
<dbReference type="InterPro" id="IPR009057">
    <property type="entry name" value="Homeodomain-like_sf"/>
</dbReference>
<dbReference type="InterPro" id="IPR017930">
    <property type="entry name" value="Myb_dom"/>
</dbReference>
<dbReference type="InterPro" id="IPR049260">
    <property type="entry name" value="REB1_MybAD"/>
</dbReference>
<dbReference type="InterPro" id="IPR001005">
    <property type="entry name" value="SANT/Myb"/>
</dbReference>
<dbReference type="PANTHER" id="PTHR46380">
    <property type="entry name" value="CYCLIN-D-BINDING MYB-LIKE TRANSCRIPTION FACTOR 1"/>
    <property type="match status" value="1"/>
</dbReference>
<dbReference type="PANTHER" id="PTHR46380:SF2">
    <property type="entry name" value="CYCLIN-D-BINDING MYB-LIKE TRANSCRIPTION FACTOR 1"/>
    <property type="match status" value="1"/>
</dbReference>
<dbReference type="Pfam" id="PF00249">
    <property type="entry name" value="Myb_DNA-binding"/>
    <property type="match status" value="1"/>
</dbReference>
<dbReference type="Pfam" id="PF21559">
    <property type="entry name" value="Reb1_MybAD"/>
    <property type="match status" value="1"/>
</dbReference>
<dbReference type="SMART" id="SM00717">
    <property type="entry name" value="SANT"/>
    <property type="match status" value="4"/>
</dbReference>
<dbReference type="SUPFAM" id="SSF46689">
    <property type="entry name" value="Homeodomain-like"/>
    <property type="match status" value="2"/>
</dbReference>
<dbReference type="PROSITE" id="PS51294">
    <property type="entry name" value="HTH_MYB"/>
    <property type="match status" value="1"/>
</dbReference>
<dbReference type="PROSITE" id="PS50090">
    <property type="entry name" value="MYB_LIKE"/>
    <property type="match status" value="1"/>
</dbReference>
<name>REB1_YEAST</name>
<reference key="1">
    <citation type="journal article" date="1990" name="Mol. Cell. Biol.">
        <title>REB1, a yeast DNA-binding protein with many targets, is essential for growth and bears some resemblance to the oncogene myb.</title>
        <authorList>
            <person name="Ju Q."/>
            <person name="Morrow B.E."/>
            <person name="Warner J.R."/>
        </authorList>
    </citation>
    <scope>NUCLEOTIDE SEQUENCE [GENOMIC DNA]</scope>
    <source>
        <strain>ATCC 204508 / S288c</strain>
    </source>
</reference>
<reference key="2">
    <citation type="journal article" date="1995" name="Yeast">
        <title>Sequence and analysis of 24 kb on chromosome II of Saccharomyces cerevisiae.</title>
        <authorList>
            <person name="Aljinovic G."/>
            <person name="Pohl T.M."/>
        </authorList>
    </citation>
    <scope>NUCLEOTIDE SEQUENCE [GENOMIC DNA]</scope>
    <source>
        <strain>ATCC 204508 / S288c</strain>
    </source>
</reference>
<reference key="3">
    <citation type="journal article" date="1994" name="EMBO J.">
        <title>Complete DNA sequence of yeast chromosome II.</title>
        <authorList>
            <person name="Feldmann H."/>
            <person name="Aigle M."/>
            <person name="Aljinovic G."/>
            <person name="Andre B."/>
            <person name="Baclet M.C."/>
            <person name="Barthe C."/>
            <person name="Baur A."/>
            <person name="Becam A.-M."/>
            <person name="Biteau N."/>
            <person name="Boles E."/>
            <person name="Brandt T."/>
            <person name="Brendel M."/>
            <person name="Brueckner M."/>
            <person name="Bussereau F."/>
            <person name="Christiansen C."/>
            <person name="Contreras R."/>
            <person name="Crouzet M."/>
            <person name="Cziepluch C."/>
            <person name="Demolis N."/>
            <person name="Delaveau T."/>
            <person name="Doignon F."/>
            <person name="Domdey H."/>
            <person name="Duesterhus S."/>
            <person name="Dubois E."/>
            <person name="Dujon B."/>
            <person name="El Bakkoury M."/>
            <person name="Entian K.-D."/>
            <person name="Feuermann M."/>
            <person name="Fiers W."/>
            <person name="Fobo G.M."/>
            <person name="Fritz C."/>
            <person name="Gassenhuber J."/>
            <person name="Glansdorff N."/>
            <person name="Goffeau A."/>
            <person name="Grivell L.A."/>
            <person name="de Haan M."/>
            <person name="Hein C."/>
            <person name="Herbert C.J."/>
            <person name="Hollenberg C.P."/>
            <person name="Holmstroem K."/>
            <person name="Jacq C."/>
            <person name="Jacquet M."/>
            <person name="Jauniaux J.-C."/>
            <person name="Jonniaux J.-L."/>
            <person name="Kallesoee T."/>
            <person name="Kiesau P."/>
            <person name="Kirchrath L."/>
            <person name="Koetter P."/>
            <person name="Korol S."/>
            <person name="Liebl S."/>
            <person name="Logghe M."/>
            <person name="Lohan A.J.E."/>
            <person name="Louis E.J."/>
            <person name="Li Z.Y."/>
            <person name="Maat M.J."/>
            <person name="Mallet L."/>
            <person name="Mannhaupt G."/>
            <person name="Messenguy F."/>
            <person name="Miosga T."/>
            <person name="Molemans F."/>
            <person name="Mueller S."/>
            <person name="Nasr F."/>
            <person name="Obermaier B."/>
            <person name="Perea J."/>
            <person name="Pierard A."/>
            <person name="Piravandi E."/>
            <person name="Pohl F.M."/>
            <person name="Pohl T.M."/>
            <person name="Potier S."/>
            <person name="Proft M."/>
            <person name="Purnelle B."/>
            <person name="Ramezani Rad M."/>
            <person name="Rieger M."/>
            <person name="Rose M."/>
            <person name="Schaaff-Gerstenschlaeger I."/>
            <person name="Scherens B."/>
            <person name="Schwarzlose C."/>
            <person name="Skala J."/>
            <person name="Slonimski P.P."/>
            <person name="Smits P.H.M."/>
            <person name="Souciet J.-L."/>
            <person name="Steensma H.Y."/>
            <person name="Stucka R."/>
            <person name="Urrestarazu L.A."/>
            <person name="van der Aart Q.J.M."/>
            <person name="Van Dyck L."/>
            <person name="Vassarotti A."/>
            <person name="Vetter I."/>
            <person name="Vierendeels F."/>
            <person name="Vissers S."/>
            <person name="Wagner G."/>
            <person name="de Wergifosse P."/>
            <person name="Wolfe K.H."/>
            <person name="Zagulski M."/>
            <person name="Zimmermann F.K."/>
            <person name="Mewes H.-W."/>
            <person name="Kleine K."/>
        </authorList>
    </citation>
    <scope>NUCLEOTIDE SEQUENCE [LARGE SCALE GENOMIC DNA]</scope>
    <source>
        <strain>ATCC 204508 / S288c</strain>
    </source>
</reference>
<reference key="4">
    <citation type="journal article" date="2014" name="G3 (Bethesda)">
        <title>The reference genome sequence of Saccharomyces cerevisiae: Then and now.</title>
        <authorList>
            <person name="Engel S.R."/>
            <person name="Dietrich F.S."/>
            <person name="Fisk D.G."/>
            <person name="Binkley G."/>
            <person name="Balakrishnan R."/>
            <person name="Costanzo M.C."/>
            <person name="Dwight S.S."/>
            <person name="Hitz B.C."/>
            <person name="Karra K."/>
            <person name="Nash R.S."/>
            <person name="Weng S."/>
            <person name="Wong E.D."/>
            <person name="Lloyd P."/>
            <person name="Skrzypek M.S."/>
            <person name="Miyasato S.R."/>
            <person name="Simison M."/>
            <person name="Cherry J.M."/>
        </authorList>
    </citation>
    <scope>GENOME REANNOTATION</scope>
    <source>
        <strain>ATCC 204508 / S288c</strain>
    </source>
</reference>
<reference key="5">
    <citation type="journal article" date="2005" name="Mol. Cell. Proteomics">
        <title>A proteomic strategy for gaining insights into protein sumoylation in yeast.</title>
        <authorList>
            <person name="Denison C."/>
            <person name="Rudner A.D."/>
            <person name="Gerber S.A."/>
            <person name="Bakalarski C.E."/>
            <person name="Moazed D."/>
            <person name="Gygi S.P."/>
        </authorList>
    </citation>
    <scope>SUMOYLATION [LARGE SCALE ANALYSIS] AT LYS-807</scope>
    <scope>IDENTIFICATION BY MASS SPECTROMETRY</scope>
    <source>
        <strain>EJY251-11b</strain>
    </source>
</reference>
<reference key="6">
    <citation type="journal article" date="2001" name="EMBO Rep.">
        <title>An activation-independent role of transcription factors in insulator function.</title>
        <authorList>
            <person name="Fourel G."/>
            <person name="Boscheron C."/>
            <person name="Revardel E."/>
            <person name="Lebrun E."/>
            <person name="Hu Y.-F."/>
            <person name="Simmen K.C."/>
            <person name="Mueller K."/>
            <person name="Li R."/>
            <person name="Mermod N."/>
            <person name="Gilson E."/>
        </authorList>
    </citation>
    <scope>FUNCTION</scope>
    <scope>SUBCELLULAR LOCATION</scope>
</reference>
<reference key="7">
    <citation type="journal article" date="2002" name="J. Biol. Chem.">
        <title>General regulatory factors (GRFs) as genome partitioners.</title>
        <authorList>
            <person name="Fourel G."/>
            <person name="Miyake T."/>
            <person name="Defossez P.-A."/>
            <person name="Li R."/>
            <person name="Gilson E."/>
        </authorList>
    </citation>
    <scope>FUNCTION</scope>
</reference>
<reference key="8">
    <citation type="journal article" date="2003" name="Nature">
        <title>Global analysis of protein expression in yeast.</title>
        <authorList>
            <person name="Ghaemmaghami S."/>
            <person name="Huh W.-K."/>
            <person name="Bower K."/>
            <person name="Howson R.W."/>
            <person name="Belle A."/>
            <person name="Dephoure N."/>
            <person name="O'Shea E.K."/>
            <person name="Weissman J.S."/>
        </authorList>
    </citation>
    <scope>LEVEL OF PROTEIN EXPRESSION [LARGE SCALE ANALYSIS]</scope>
</reference>
<reference key="9">
    <citation type="journal article" date="2007" name="J. Proteome Res.">
        <title>Large-scale phosphorylation analysis of alpha-factor-arrested Saccharomyces cerevisiae.</title>
        <authorList>
            <person name="Li X."/>
            <person name="Gerber S.A."/>
            <person name="Rudner A.D."/>
            <person name="Beausoleil S.A."/>
            <person name="Haas W."/>
            <person name="Villen J."/>
            <person name="Elias J.E."/>
            <person name="Gygi S.P."/>
        </authorList>
    </citation>
    <scope>PHOSPHORYLATION [LARGE SCALE ANALYSIS] AT SER-355</scope>
    <scope>IDENTIFICATION BY MASS SPECTROMETRY [LARGE SCALE ANALYSIS]</scope>
    <source>
        <strain>ADR376</strain>
    </source>
</reference>
<reference key="10">
    <citation type="journal article" date="2008" name="Mol. Cell. Proteomics">
        <title>A multidimensional chromatography technology for in-depth phosphoproteome analysis.</title>
        <authorList>
            <person name="Albuquerque C.P."/>
            <person name="Smolka M.B."/>
            <person name="Payne S.H."/>
            <person name="Bafna V."/>
            <person name="Eng J."/>
            <person name="Zhou H."/>
        </authorList>
    </citation>
    <scope>IDENTIFICATION BY MASS SPECTROMETRY [LARGE SCALE ANALYSIS]</scope>
</reference>
<reference key="11">
    <citation type="journal article" date="2009" name="Science">
        <title>Global analysis of Cdk1 substrate phosphorylation sites provides insights into evolution.</title>
        <authorList>
            <person name="Holt L.J."/>
            <person name="Tuch B.B."/>
            <person name="Villen J."/>
            <person name="Johnson A.D."/>
            <person name="Gygi S.P."/>
            <person name="Morgan D.O."/>
        </authorList>
    </citation>
    <scope>IDENTIFICATION BY MASS SPECTROMETRY [LARGE SCALE ANALYSIS]</scope>
</reference>
<evidence type="ECO:0000255" key="1">
    <source>
        <dbReference type="PROSITE-ProRule" id="PRU00133"/>
    </source>
</evidence>
<evidence type="ECO:0000255" key="2">
    <source>
        <dbReference type="PROSITE-ProRule" id="PRU00625"/>
    </source>
</evidence>
<evidence type="ECO:0000256" key="3">
    <source>
        <dbReference type="SAM" id="MobiDB-lite"/>
    </source>
</evidence>
<evidence type="ECO:0000269" key="4">
    <source>
    </source>
</evidence>
<evidence type="ECO:0000269" key="5">
    <source>
    </source>
</evidence>
<evidence type="ECO:0000269" key="6">
    <source>
    </source>
</evidence>
<evidence type="ECO:0000269" key="7">
    <source>
    </source>
</evidence>
<evidence type="ECO:0000305" key="8"/>
<evidence type="ECO:0000305" key="9">
    <source>
    </source>
</evidence>
<evidence type="ECO:0007744" key="10">
    <source>
    </source>
</evidence>
<feature type="chain" id="PRO_0000197089" description="DNA-binding protein REB1">
    <location>
        <begin position="1"/>
        <end position="810"/>
    </location>
</feature>
<feature type="domain" description="HTH myb-type" evidence="2">
    <location>
        <begin position="470"/>
        <end position="523"/>
    </location>
</feature>
<feature type="domain" description="Myb-like" evidence="1">
    <location>
        <begin position="692"/>
        <end position="717"/>
    </location>
</feature>
<feature type="DNA-binding region" description="H-T-H motif" evidence="2">
    <location>
        <begin position="497"/>
        <end position="519"/>
    </location>
</feature>
<feature type="region of interest" description="Disordered" evidence="3">
    <location>
        <begin position="1"/>
        <end position="80"/>
    </location>
</feature>
<feature type="region of interest" description="Disordered" evidence="3">
    <location>
        <begin position="114"/>
        <end position="161"/>
    </location>
</feature>
<feature type="region of interest" description="Disordered" evidence="3">
    <location>
        <begin position="180"/>
        <end position="243"/>
    </location>
</feature>
<feature type="region of interest" description="Disordered" evidence="3">
    <location>
        <begin position="294"/>
        <end position="313"/>
    </location>
</feature>
<feature type="region of interest" description="Disordered" evidence="3">
    <location>
        <begin position="346"/>
        <end position="365"/>
    </location>
</feature>
<feature type="region of interest" description="Disordered" evidence="3">
    <location>
        <begin position="572"/>
        <end position="667"/>
    </location>
</feature>
<feature type="compositionally biased region" description="Basic and acidic residues" evidence="3">
    <location>
        <begin position="1"/>
        <end position="10"/>
    </location>
</feature>
<feature type="compositionally biased region" description="Basic and acidic residues" evidence="3">
    <location>
        <begin position="29"/>
        <end position="44"/>
    </location>
</feature>
<feature type="compositionally biased region" description="Low complexity" evidence="3">
    <location>
        <begin position="51"/>
        <end position="64"/>
    </location>
</feature>
<feature type="compositionally biased region" description="Low complexity" evidence="3">
    <location>
        <begin position="124"/>
        <end position="135"/>
    </location>
</feature>
<feature type="compositionally biased region" description="Basic and acidic residues" evidence="3">
    <location>
        <begin position="149"/>
        <end position="161"/>
    </location>
</feature>
<feature type="compositionally biased region" description="Low complexity" evidence="3">
    <location>
        <begin position="180"/>
        <end position="191"/>
    </location>
</feature>
<feature type="compositionally biased region" description="Basic and acidic residues" evidence="3">
    <location>
        <begin position="198"/>
        <end position="208"/>
    </location>
</feature>
<feature type="compositionally biased region" description="Polar residues" evidence="3">
    <location>
        <begin position="346"/>
        <end position="355"/>
    </location>
</feature>
<feature type="compositionally biased region" description="Low complexity" evidence="3">
    <location>
        <begin position="586"/>
        <end position="606"/>
    </location>
</feature>
<feature type="compositionally biased region" description="Basic and acidic residues" evidence="3">
    <location>
        <begin position="627"/>
        <end position="636"/>
    </location>
</feature>
<feature type="compositionally biased region" description="Polar residues" evidence="3">
    <location>
        <begin position="643"/>
        <end position="667"/>
    </location>
</feature>
<feature type="modified residue" description="Phosphoserine" evidence="10">
    <location>
        <position position="355"/>
    </location>
</feature>
<feature type="cross-link" description="Glycyl lysine isopeptide (Lys-Gly) (interchain with G-Cter in SUMO)" evidence="7">
    <location>
        <position position="807"/>
    </location>
</feature>
<feature type="sequence conflict" description="In Ref. 1; AAA34963." evidence="8" ref="1">
    <original>S</original>
    <variation>N</variation>
    <location>
        <position position="56"/>
    </location>
</feature>
<feature type="sequence conflict" description="In Ref. 1; AAA34963." evidence="8" ref="1">
    <original>AAAAIQEQQQLLQQKQQDDDDAIAAAA</original>
    <variation>RAVVFKNNNNFFNKSSKMMTMLLRSC</variation>
    <location>
        <begin position="592"/>
        <end position="618"/>
    </location>
</feature>
<feature type="sequence conflict" description="In Ref. 1; AAA34963." evidence="8" ref="1">
    <original>D</original>
    <variation>E</variation>
    <location>
        <position position="627"/>
    </location>
</feature>
<feature type="sequence conflict" description="In Ref. 1; AAA34963." evidence="8" ref="1">
    <original>D</original>
    <variation>E</variation>
    <location>
        <position position="636"/>
    </location>
</feature>
<comment type="function">
    <text evidence="4 5">DNA-binding protein that recognizes sites within both the enhancer and the promoter of rRNA transcription, as well as upstream of many genes transcribed by RNA polymerase II. It is essential for cell growth. May stimulate or inhibit transcription. Specifically recognizes the sequence 5'-CCGGGTA-3' or 5'-CGGGTRR-3' (where R is any purine). A member of the general regulatory factors (GRFs) which act as genome partitioners. Acts as a chromatin insulator which are known as STARs (Subtelomeric anti-silencing region). STARs prevent negative or positive transcription influence by extending across chromatin to a promoter.</text>
</comment>
<comment type="subcellular location">
    <subcellularLocation>
        <location evidence="9">Nucleus</location>
    </subcellularLocation>
</comment>
<comment type="miscellaneous">
    <text evidence="6">Present with 7510 molecules/cell in log phase SD medium.</text>
</comment>